<protein>
    <recommendedName>
        <fullName evidence="1">Glutathione-regulated potassium-efflux system ancillary protein KefF</fullName>
    </recommendedName>
    <alternativeName>
        <fullName evidence="1">Quinone oxidoreductase KefF</fullName>
        <ecNumber evidence="1">1.6.5.2</ecNumber>
    </alternativeName>
</protein>
<dbReference type="EC" id="1.6.5.2" evidence="1"/>
<dbReference type="EMBL" id="CP000880">
    <property type="protein sequence ID" value="ABX22765.1"/>
    <property type="molecule type" value="Genomic_DNA"/>
</dbReference>
<dbReference type="SMR" id="A9MQG7"/>
<dbReference type="STRING" id="41514.SARI_02919"/>
<dbReference type="KEGG" id="ses:SARI_02919"/>
<dbReference type="HOGENOM" id="CLU_058643_0_2_6"/>
<dbReference type="Proteomes" id="UP000002084">
    <property type="component" value="Chromosome"/>
</dbReference>
<dbReference type="GO" id="GO:0005886">
    <property type="term" value="C:plasma membrane"/>
    <property type="evidence" value="ECO:0007669"/>
    <property type="project" value="UniProtKB-SubCell"/>
</dbReference>
<dbReference type="GO" id="GO:0009055">
    <property type="term" value="F:electron transfer activity"/>
    <property type="evidence" value="ECO:0007669"/>
    <property type="project" value="TreeGrafter"/>
</dbReference>
<dbReference type="GO" id="GO:0010181">
    <property type="term" value="F:FMN binding"/>
    <property type="evidence" value="ECO:0007669"/>
    <property type="project" value="UniProtKB-UniRule"/>
</dbReference>
<dbReference type="GO" id="GO:0050136">
    <property type="term" value="F:NADH:ubiquinone reductase (non-electrogenic) activity"/>
    <property type="evidence" value="ECO:0007669"/>
    <property type="project" value="RHEA"/>
</dbReference>
<dbReference type="GO" id="GO:0008753">
    <property type="term" value="F:NADPH dehydrogenase (quinone) activity"/>
    <property type="evidence" value="ECO:0007669"/>
    <property type="project" value="RHEA"/>
</dbReference>
<dbReference type="GO" id="GO:1901381">
    <property type="term" value="P:positive regulation of potassium ion transmembrane transport"/>
    <property type="evidence" value="ECO:0007669"/>
    <property type="project" value="UniProtKB-UniRule"/>
</dbReference>
<dbReference type="GO" id="GO:0006813">
    <property type="term" value="P:potassium ion transport"/>
    <property type="evidence" value="ECO:0007669"/>
    <property type="project" value="InterPro"/>
</dbReference>
<dbReference type="FunFam" id="3.40.50.360:FF:000008">
    <property type="entry name" value="Glutathione-regulated potassium-efflux system ancillary protein KefF"/>
    <property type="match status" value="1"/>
</dbReference>
<dbReference type="Gene3D" id="3.40.50.360">
    <property type="match status" value="1"/>
</dbReference>
<dbReference type="HAMAP" id="MF_01414">
    <property type="entry name" value="K_H_efflux_KefF"/>
    <property type="match status" value="1"/>
</dbReference>
<dbReference type="InterPro" id="IPR003680">
    <property type="entry name" value="Flavodoxin_fold"/>
</dbReference>
<dbReference type="InterPro" id="IPR029039">
    <property type="entry name" value="Flavoprotein-like_sf"/>
</dbReference>
<dbReference type="InterPro" id="IPR023948">
    <property type="entry name" value="K_H_efflux_KefF"/>
</dbReference>
<dbReference type="InterPro" id="IPR046980">
    <property type="entry name" value="KefG/KefF"/>
</dbReference>
<dbReference type="NCBIfam" id="NF002044">
    <property type="entry name" value="PRK00871.1"/>
    <property type="match status" value="1"/>
</dbReference>
<dbReference type="PANTHER" id="PTHR47307:SF2">
    <property type="entry name" value="GLUTATHIONE-REGULATED POTASSIUM-EFFLUX SYSTEM ANCILLARY PROTEIN KEFF"/>
    <property type="match status" value="1"/>
</dbReference>
<dbReference type="PANTHER" id="PTHR47307">
    <property type="entry name" value="GLUTATHIONE-REGULATED POTASSIUM-EFFLUX SYSTEM ANCILLARY PROTEIN KEFG"/>
    <property type="match status" value="1"/>
</dbReference>
<dbReference type="Pfam" id="PF02525">
    <property type="entry name" value="Flavodoxin_2"/>
    <property type="match status" value="1"/>
</dbReference>
<dbReference type="SUPFAM" id="SSF52218">
    <property type="entry name" value="Flavoproteins"/>
    <property type="match status" value="1"/>
</dbReference>
<accession>A9MQG7</accession>
<feature type="chain" id="PRO_1000087401" description="Glutathione-regulated potassium-efflux system ancillary protein KefF">
    <location>
        <begin position="1"/>
        <end position="176"/>
    </location>
</feature>
<feature type="binding site" evidence="1">
    <location>
        <position position="8"/>
    </location>
    <ligand>
        <name>FMN</name>
        <dbReference type="ChEBI" id="CHEBI:58210"/>
    </ligand>
</feature>
<feature type="binding site" evidence="1">
    <location>
        <begin position="14"/>
        <end position="17"/>
    </location>
    <ligand>
        <name>FMN</name>
        <dbReference type="ChEBI" id="CHEBI:58210"/>
    </ligand>
</feature>
<feature type="binding site" evidence="1">
    <location>
        <begin position="65"/>
        <end position="68"/>
    </location>
    <ligand>
        <name>FMN</name>
        <dbReference type="ChEBI" id="CHEBI:58210"/>
    </ligand>
</feature>
<feature type="binding site" evidence="1">
    <location>
        <begin position="105"/>
        <end position="108"/>
    </location>
    <ligand>
        <name>FMN</name>
        <dbReference type="ChEBI" id="CHEBI:58210"/>
    </ligand>
</feature>
<sequence length="176" mass="19982">MILIIYAHPYPHHSHANKRMLEQAGTLENVEIRSLYHLYPDFNIDVAAEQQALSRATLIVWQHPMQWYSVPPLLKLWMDKVLAHGWAYGHGGTALHGKHLLWAVTTGGGENHFTIGSHPGFDVLSQPLQATALYCGLTWLPPFAMHCTFICDDDTLQAQARHYKQRLLAWQEANHG</sequence>
<reference key="1">
    <citation type="submission" date="2007-11" db="EMBL/GenBank/DDBJ databases">
        <authorList>
            <consortium name="The Salmonella enterica serovar Arizonae Genome Sequencing Project"/>
            <person name="McClelland M."/>
            <person name="Sanderson E.K."/>
            <person name="Porwollik S."/>
            <person name="Spieth J."/>
            <person name="Clifton W.S."/>
            <person name="Fulton R."/>
            <person name="Chunyan W."/>
            <person name="Wollam A."/>
            <person name="Shah N."/>
            <person name="Pepin K."/>
            <person name="Bhonagiri V."/>
            <person name="Nash W."/>
            <person name="Johnson M."/>
            <person name="Thiruvilangam P."/>
            <person name="Wilson R."/>
        </authorList>
    </citation>
    <scope>NUCLEOTIDE SEQUENCE [LARGE SCALE GENOMIC DNA]</scope>
    <source>
        <strain>ATCC BAA-731 / CDC346-86 / RSK2980</strain>
    </source>
</reference>
<keyword id="KW-0997">Cell inner membrane</keyword>
<keyword id="KW-1003">Cell membrane</keyword>
<keyword id="KW-0285">Flavoprotein</keyword>
<keyword id="KW-0288">FMN</keyword>
<keyword id="KW-0472">Membrane</keyword>
<keyword id="KW-0520">NAD</keyword>
<keyword id="KW-0560">Oxidoreductase</keyword>
<keyword id="KW-1185">Reference proteome</keyword>
<organism>
    <name type="scientific">Salmonella arizonae (strain ATCC BAA-731 / CDC346-86 / RSK2980)</name>
    <dbReference type="NCBI Taxonomy" id="41514"/>
    <lineage>
        <taxon>Bacteria</taxon>
        <taxon>Pseudomonadati</taxon>
        <taxon>Pseudomonadota</taxon>
        <taxon>Gammaproteobacteria</taxon>
        <taxon>Enterobacterales</taxon>
        <taxon>Enterobacteriaceae</taxon>
        <taxon>Salmonella</taxon>
    </lineage>
</organism>
<proteinExistence type="inferred from homology"/>
<comment type="function">
    <text evidence="1">Regulatory subunit of a potassium efflux system that confers protection against electrophiles. Required for full activity of KefC. Shows redox enzymatic activity, but this enzymatic activity is not required for activation of KefC.</text>
</comment>
<comment type="catalytic activity">
    <reaction evidence="1">
        <text>a quinone + NADH + H(+) = a quinol + NAD(+)</text>
        <dbReference type="Rhea" id="RHEA:46160"/>
        <dbReference type="ChEBI" id="CHEBI:15378"/>
        <dbReference type="ChEBI" id="CHEBI:24646"/>
        <dbReference type="ChEBI" id="CHEBI:57540"/>
        <dbReference type="ChEBI" id="CHEBI:57945"/>
        <dbReference type="ChEBI" id="CHEBI:132124"/>
        <dbReference type="EC" id="1.6.5.2"/>
    </reaction>
</comment>
<comment type="catalytic activity">
    <reaction evidence="1">
        <text>a quinone + NADPH + H(+) = a quinol + NADP(+)</text>
        <dbReference type="Rhea" id="RHEA:46164"/>
        <dbReference type="ChEBI" id="CHEBI:15378"/>
        <dbReference type="ChEBI" id="CHEBI:24646"/>
        <dbReference type="ChEBI" id="CHEBI:57783"/>
        <dbReference type="ChEBI" id="CHEBI:58349"/>
        <dbReference type="ChEBI" id="CHEBI:132124"/>
        <dbReference type="EC" id="1.6.5.2"/>
    </reaction>
</comment>
<comment type="cofactor">
    <cofactor evidence="1">
        <name>FMN</name>
        <dbReference type="ChEBI" id="CHEBI:58210"/>
    </cofactor>
</comment>
<comment type="subunit">
    <text evidence="1">Homodimer. Interacts with KefC.</text>
</comment>
<comment type="subcellular location">
    <subcellularLocation>
        <location evidence="1">Cell inner membrane</location>
        <topology evidence="1">Peripheral membrane protein</topology>
        <orientation evidence="1">Cytoplasmic side</orientation>
    </subcellularLocation>
</comment>
<comment type="similarity">
    <text evidence="1">Belongs to the NAD(P)H dehydrogenase (quinone) family. KefF subfamily.</text>
</comment>
<gene>
    <name evidence="1" type="primary">kefF</name>
    <name type="ordered locus">SARI_02919</name>
</gene>
<name>KEFF_SALAR</name>
<evidence type="ECO:0000255" key="1">
    <source>
        <dbReference type="HAMAP-Rule" id="MF_01414"/>
    </source>
</evidence>